<sequence>MRDYIELTKPRITWLILMSTGIGYFFGLPQASNWLTFLKNIDLLRLLHTIIGTGLIASGTAALNQWYEREGDLKMHRTAGRPLPSGRLIAGRALAFGVALSIAGFVELWLGVNLLSAGIGAFTLASYLFLYTPMKRRTWWSTTVGAIPGAMPPVIGFAAAAGGLTRESWVLFAILFLWQFPHFYSIAWMYKEDYARAGIQMLPVVDPDCRSTARQIVIYGIALIPVSLVPALLGMSGRLYLVGALLLGLWFLYSGVRVALERTLVRARGVLITSVLYLPLIYGLMLLDRPGL</sequence>
<dbReference type="EC" id="2.5.1.141" evidence="1"/>
<dbReference type="EMBL" id="CP000473">
    <property type="protein sequence ID" value="ABJ85343.1"/>
    <property type="molecule type" value="Genomic_DNA"/>
</dbReference>
<dbReference type="SMR" id="Q01YC2"/>
<dbReference type="FunCoup" id="Q01YC2">
    <property type="interactions" value="472"/>
</dbReference>
<dbReference type="STRING" id="234267.Acid_4382"/>
<dbReference type="KEGG" id="sus:Acid_4382"/>
<dbReference type="eggNOG" id="COG0109">
    <property type="taxonomic scope" value="Bacteria"/>
</dbReference>
<dbReference type="HOGENOM" id="CLU_029631_0_0_0"/>
<dbReference type="InParanoid" id="Q01YC2"/>
<dbReference type="OrthoDB" id="9814417at2"/>
<dbReference type="UniPathway" id="UPA00834">
    <property type="reaction ID" value="UER00712"/>
</dbReference>
<dbReference type="GO" id="GO:0005886">
    <property type="term" value="C:plasma membrane"/>
    <property type="evidence" value="ECO:0007669"/>
    <property type="project" value="UniProtKB-SubCell"/>
</dbReference>
<dbReference type="GO" id="GO:0008495">
    <property type="term" value="F:protoheme IX farnesyltransferase activity"/>
    <property type="evidence" value="ECO:0007669"/>
    <property type="project" value="UniProtKB-UniRule"/>
</dbReference>
<dbReference type="GO" id="GO:0048034">
    <property type="term" value="P:heme O biosynthetic process"/>
    <property type="evidence" value="ECO:0007669"/>
    <property type="project" value="UniProtKB-UniRule"/>
</dbReference>
<dbReference type="CDD" id="cd13957">
    <property type="entry name" value="PT_UbiA_Cox10"/>
    <property type="match status" value="1"/>
</dbReference>
<dbReference type="Gene3D" id="1.10.357.140">
    <property type="entry name" value="UbiA prenyltransferase"/>
    <property type="match status" value="1"/>
</dbReference>
<dbReference type="HAMAP" id="MF_00154">
    <property type="entry name" value="CyoE_CtaB"/>
    <property type="match status" value="1"/>
</dbReference>
<dbReference type="InterPro" id="IPR006369">
    <property type="entry name" value="Protohaem_IX_farnesylTrfase"/>
</dbReference>
<dbReference type="InterPro" id="IPR000537">
    <property type="entry name" value="UbiA_prenyltransferase"/>
</dbReference>
<dbReference type="InterPro" id="IPR044878">
    <property type="entry name" value="UbiA_sf"/>
</dbReference>
<dbReference type="NCBIfam" id="TIGR01473">
    <property type="entry name" value="cyoE_ctaB"/>
    <property type="match status" value="1"/>
</dbReference>
<dbReference type="PANTHER" id="PTHR43448:SF7">
    <property type="entry name" value="4-HYDROXYBENZOATE SOLANESYLTRANSFERASE"/>
    <property type="match status" value="1"/>
</dbReference>
<dbReference type="PANTHER" id="PTHR43448">
    <property type="entry name" value="PROTOHEME IX FARNESYLTRANSFERASE, MITOCHONDRIAL"/>
    <property type="match status" value="1"/>
</dbReference>
<dbReference type="Pfam" id="PF01040">
    <property type="entry name" value="UbiA"/>
    <property type="match status" value="1"/>
</dbReference>
<evidence type="ECO:0000255" key="1">
    <source>
        <dbReference type="HAMAP-Rule" id="MF_00154"/>
    </source>
</evidence>
<organism>
    <name type="scientific">Solibacter usitatus (strain Ellin6076)</name>
    <dbReference type="NCBI Taxonomy" id="234267"/>
    <lineage>
        <taxon>Bacteria</taxon>
        <taxon>Pseudomonadati</taxon>
        <taxon>Acidobacteriota</taxon>
        <taxon>Terriglobia</taxon>
        <taxon>Bryobacterales</taxon>
        <taxon>Solibacteraceae</taxon>
        <taxon>Candidatus Solibacter</taxon>
    </lineage>
</organism>
<proteinExistence type="inferred from homology"/>
<comment type="function">
    <text evidence="1">Converts heme B (protoheme IX) to heme O by substitution of the vinyl group on carbon 2 of heme B porphyrin ring with a hydroxyethyl farnesyl side group.</text>
</comment>
<comment type="catalytic activity">
    <reaction evidence="1">
        <text>heme b + (2E,6E)-farnesyl diphosphate + H2O = Fe(II)-heme o + diphosphate</text>
        <dbReference type="Rhea" id="RHEA:28070"/>
        <dbReference type="ChEBI" id="CHEBI:15377"/>
        <dbReference type="ChEBI" id="CHEBI:33019"/>
        <dbReference type="ChEBI" id="CHEBI:60344"/>
        <dbReference type="ChEBI" id="CHEBI:60530"/>
        <dbReference type="ChEBI" id="CHEBI:175763"/>
        <dbReference type="EC" id="2.5.1.141"/>
    </reaction>
</comment>
<comment type="pathway">
    <text evidence="1">Porphyrin-containing compound metabolism; heme O biosynthesis; heme O from protoheme: step 1/1.</text>
</comment>
<comment type="subcellular location">
    <subcellularLocation>
        <location evidence="1">Cell inner membrane</location>
        <topology evidence="1">Multi-pass membrane protein</topology>
    </subcellularLocation>
</comment>
<comment type="miscellaneous">
    <text evidence="1">Carbon 2 of the heme B porphyrin ring is defined according to the Fischer nomenclature.</text>
</comment>
<comment type="similarity">
    <text evidence="1">Belongs to the UbiA prenyltransferase family. Protoheme IX farnesyltransferase subfamily.</text>
</comment>
<keyword id="KW-0997">Cell inner membrane</keyword>
<keyword id="KW-1003">Cell membrane</keyword>
<keyword id="KW-0350">Heme biosynthesis</keyword>
<keyword id="KW-0472">Membrane</keyword>
<keyword id="KW-0808">Transferase</keyword>
<keyword id="KW-0812">Transmembrane</keyword>
<keyword id="KW-1133">Transmembrane helix</keyword>
<protein>
    <recommendedName>
        <fullName evidence="1">Protoheme IX farnesyltransferase</fullName>
        <ecNumber evidence="1">2.5.1.141</ecNumber>
    </recommendedName>
    <alternativeName>
        <fullName evidence="1">Heme B farnesyltransferase</fullName>
    </alternativeName>
    <alternativeName>
        <fullName evidence="1">Heme O synthase</fullName>
    </alternativeName>
</protein>
<reference key="1">
    <citation type="journal article" date="2009" name="Appl. Environ. Microbiol.">
        <title>Three genomes from the phylum Acidobacteria provide insight into the lifestyles of these microorganisms in soils.</title>
        <authorList>
            <person name="Ward N.L."/>
            <person name="Challacombe J.F."/>
            <person name="Janssen P.H."/>
            <person name="Henrissat B."/>
            <person name="Coutinho P.M."/>
            <person name="Wu M."/>
            <person name="Xie G."/>
            <person name="Haft D.H."/>
            <person name="Sait M."/>
            <person name="Badger J."/>
            <person name="Barabote R.D."/>
            <person name="Bradley B."/>
            <person name="Brettin T.S."/>
            <person name="Brinkac L.M."/>
            <person name="Bruce D."/>
            <person name="Creasy T."/>
            <person name="Daugherty S.C."/>
            <person name="Davidsen T.M."/>
            <person name="DeBoy R.T."/>
            <person name="Detter J.C."/>
            <person name="Dodson R.J."/>
            <person name="Durkin A.S."/>
            <person name="Ganapathy A."/>
            <person name="Gwinn-Giglio M."/>
            <person name="Han C.S."/>
            <person name="Khouri H."/>
            <person name="Kiss H."/>
            <person name="Kothari S.P."/>
            <person name="Madupu R."/>
            <person name="Nelson K.E."/>
            <person name="Nelson W.C."/>
            <person name="Paulsen I."/>
            <person name="Penn K."/>
            <person name="Ren Q."/>
            <person name="Rosovitz M.J."/>
            <person name="Selengut J.D."/>
            <person name="Shrivastava S."/>
            <person name="Sullivan S.A."/>
            <person name="Tapia R."/>
            <person name="Thompson L.S."/>
            <person name="Watkins K.L."/>
            <person name="Yang Q."/>
            <person name="Yu C."/>
            <person name="Zafar N."/>
            <person name="Zhou L."/>
            <person name="Kuske C.R."/>
        </authorList>
    </citation>
    <scope>NUCLEOTIDE SEQUENCE [LARGE SCALE GENOMIC DNA]</scope>
    <source>
        <strain>Ellin6076</strain>
    </source>
</reference>
<feature type="chain" id="PRO_0000327152" description="Protoheme IX farnesyltransferase">
    <location>
        <begin position="1"/>
        <end position="292"/>
    </location>
</feature>
<feature type="transmembrane region" description="Helical" evidence="1">
    <location>
        <begin position="12"/>
        <end position="32"/>
    </location>
</feature>
<feature type="transmembrane region" description="Helical" evidence="1">
    <location>
        <begin position="43"/>
        <end position="63"/>
    </location>
</feature>
<feature type="transmembrane region" description="Helical" evidence="1">
    <location>
        <begin position="94"/>
        <end position="114"/>
    </location>
</feature>
<feature type="transmembrane region" description="Helical" evidence="1">
    <location>
        <begin position="115"/>
        <end position="135"/>
    </location>
</feature>
<feature type="transmembrane region" description="Helical" evidence="1">
    <location>
        <begin position="144"/>
        <end position="164"/>
    </location>
</feature>
<feature type="transmembrane region" description="Helical" evidence="1">
    <location>
        <begin position="169"/>
        <end position="189"/>
    </location>
</feature>
<feature type="transmembrane region" description="Helical" evidence="1">
    <location>
        <begin position="216"/>
        <end position="236"/>
    </location>
</feature>
<feature type="transmembrane region" description="Helical" evidence="1">
    <location>
        <begin position="239"/>
        <end position="259"/>
    </location>
</feature>
<feature type="transmembrane region" description="Helical" evidence="1">
    <location>
        <begin position="267"/>
        <end position="287"/>
    </location>
</feature>
<gene>
    <name evidence="1" type="primary">ctaB</name>
    <name type="ordered locus">Acid_4382</name>
</gene>
<name>COXX_SOLUE</name>
<accession>Q01YC2</accession>